<keyword id="KW-0002">3D-structure</keyword>
<keyword id="KW-0456">Lyase</keyword>
<keyword id="KW-0663">Pyridoxal phosphate</keyword>
<keyword id="KW-1185">Reference proteome</keyword>
<keyword id="KW-0704">Schiff base</keyword>
<proteinExistence type="evidence at protein level"/>
<dbReference type="EC" id="4.3.3.6" evidence="1"/>
<dbReference type="EMBL" id="L77117">
    <property type="protein sequence ID" value="AAB98672.1"/>
    <property type="molecule type" value="Genomic_DNA"/>
</dbReference>
<dbReference type="PIR" id="E64384">
    <property type="entry name" value="E64384"/>
</dbReference>
<dbReference type="RefSeq" id="WP_010870182.1">
    <property type="nucleotide sequence ID" value="NC_000909.1"/>
</dbReference>
<dbReference type="PDB" id="2YZR">
    <property type="method" value="X-ray"/>
    <property type="resolution" value="2.30 A"/>
    <property type="chains" value="A/B/C=1-330"/>
</dbReference>
<dbReference type="PDBsum" id="2YZR"/>
<dbReference type="SMR" id="Q58090"/>
<dbReference type="FunCoup" id="Q58090">
    <property type="interactions" value="182"/>
</dbReference>
<dbReference type="STRING" id="243232.MJ_0677"/>
<dbReference type="PaxDb" id="243232-MJ_0677"/>
<dbReference type="EnsemblBacteria" id="AAB98672">
    <property type="protein sequence ID" value="AAB98672"/>
    <property type="gene ID" value="MJ_0677"/>
</dbReference>
<dbReference type="GeneID" id="1451543"/>
<dbReference type="KEGG" id="mja:MJ_0677"/>
<dbReference type="eggNOG" id="arCOG04075">
    <property type="taxonomic scope" value="Archaea"/>
</dbReference>
<dbReference type="HOGENOM" id="CLU_055352_1_0_2"/>
<dbReference type="InParanoid" id="Q58090"/>
<dbReference type="OrthoDB" id="6840at2157"/>
<dbReference type="PhylomeDB" id="Q58090"/>
<dbReference type="UniPathway" id="UPA00245"/>
<dbReference type="EvolutionaryTrace" id="Q58090"/>
<dbReference type="Proteomes" id="UP000000805">
    <property type="component" value="Chromosome"/>
</dbReference>
<dbReference type="GO" id="GO:0016843">
    <property type="term" value="F:amine-lyase activity"/>
    <property type="evidence" value="ECO:0000318"/>
    <property type="project" value="GO_Central"/>
</dbReference>
<dbReference type="GO" id="GO:0036381">
    <property type="term" value="F:pyridoxal 5'-phosphate synthase (glutamine hydrolysing) activity"/>
    <property type="evidence" value="ECO:0007669"/>
    <property type="project" value="UniProtKB-UniRule"/>
</dbReference>
<dbReference type="GO" id="GO:0006520">
    <property type="term" value="P:amino acid metabolic process"/>
    <property type="evidence" value="ECO:0000318"/>
    <property type="project" value="GO_Central"/>
</dbReference>
<dbReference type="GO" id="GO:0042823">
    <property type="term" value="P:pyridoxal phosphate biosynthetic process"/>
    <property type="evidence" value="ECO:0000318"/>
    <property type="project" value="GO_Central"/>
</dbReference>
<dbReference type="GO" id="GO:0008615">
    <property type="term" value="P:pyridoxine biosynthetic process"/>
    <property type="evidence" value="ECO:0000318"/>
    <property type="project" value="GO_Central"/>
</dbReference>
<dbReference type="CDD" id="cd04727">
    <property type="entry name" value="pdxS"/>
    <property type="match status" value="1"/>
</dbReference>
<dbReference type="FunFam" id="3.20.20.70:FF:000406">
    <property type="entry name" value="Pyridoxal 5'-phosphate synthase subunit PdxS"/>
    <property type="match status" value="1"/>
</dbReference>
<dbReference type="Gene3D" id="3.20.20.70">
    <property type="entry name" value="Aldolase class I"/>
    <property type="match status" value="1"/>
</dbReference>
<dbReference type="HAMAP" id="MF_01824">
    <property type="entry name" value="PdxS"/>
    <property type="match status" value="1"/>
</dbReference>
<dbReference type="InterPro" id="IPR013785">
    <property type="entry name" value="Aldolase_TIM"/>
</dbReference>
<dbReference type="InterPro" id="IPR001852">
    <property type="entry name" value="PdxS/SNZ"/>
</dbReference>
<dbReference type="InterPro" id="IPR033755">
    <property type="entry name" value="PdxS/SNZ_N"/>
</dbReference>
<dbReference type="InterPro" id="IPR011060">
    <property type="entry name" value="RibuloseP-bd_barrel"/>
</dbReference>
<dbReference type="InterPro" id="IPR033983">
    <property type="entry name" value="Thiazole_synthase_ThiG"/>
</dbReference>
<dbReference type="NCBIfam" id="NF003215">
    <property type="entry name" value="PRK04180.1"/>
    <property type="match status" value="1"/>
</dbReference>
<dbReference type="NCBIfam" id="TIGR00343">
    <property type="entry name" value="pyridoxal 5'-phosphate synthase lyase subunit PdxS"/>
    <property type="match status" value="1"/>
</dbReference>
<dbReference type="PANTHER" id="PTHR31829">
    <property type="entry name" value="PYRIDOXAL 5'-PHOSPHATE SYNTHASE SUBUNIT SNZ1-RELATED"/>
    <property type="match status" value="1"/>
</dbReference>
<dbReference type="PANTHER" id="PTHR31829:SF0">
    <property type="entry name" value="PYRIDOXAL 5'-PHOSPHATE SYNTHASE SUBUNIT SNZ1-RELATED"/>
    <property type="match status" value="1"/>
</dbReference>
<dbReference type="Pfam" id="PF01680">
    <property type="entry name" value="SOR_SNZ"/>
    <property type="match status" value="1"/>
</dbReference>
<dbReference type="Pfam" id="PF05690">
    <property type="entry name" value="ThiG"/>
    <property type="match status" value="1"/>
</dbReference>
<dbReference type="PIRSF" id="PIRSF029271">
    <property type="entry name" value="Pdx1"/>
    <property type="match status" value="1"/>
</dbReference>
<dbReference type="SUPFAM" id="SSF51366">
    <property type="entry name" value="Ribulose-phoshate binding barrel"/>
    <property type="match status" value="1"/>
</dbReference>
<dbReference type="PROSITE" id="PS01235">
    <property type="entry name" value="PDXS_SNZ_1"/>
    <property type="match status" value="1"/>
</dbReference>
<dbReference type="PROSITE" id="PS51129">
    <property type="entry name" value="PDXS_SNZ_2"/>
    <property type="match status" value="1"/>
</dbReference>
<gene>
    <name evidence="1" type="primary">pdxS</name>
    <name type="ordered locus">MJ0677</name>
</gene>
<reference key="1">
    <citation type="journal article" date="1996" name="Science">
        <title>Complete genome sequence of the methanogenic archaeon, Methanococcus jannaschii.</title>
        <authorList>
            <person name="Bult C.J."/>
            <person name="White O."/>
            <person name="Olsen G.J."/>
            <person name="Zhou L."/>
            <person name="Fleischmann R.D."/>
            <person name="Sutton G.G."/>
            <person name="Blake J.A."/>
            <person name="FitzGerald L.M."/>
            <person name="Clayton R.A."/>
            <person name="Gocayne J.D."/>
            <person name="Kerlavage A.R."/>
            <person name="Dougherty B.A."/>
            <person name="Tomb J.-F."/>
            <person name="Adams M.D."/>
            <person name="Reich C.I."/>
            <person name="Overbeek R."/>
            <person name="Kirkness E.F."/>
            <person name="Weinstock K.G."/>
            <person name="Merrick J.M."/>
            <person name="Glodek A."/>
            <person name="Scott J.L."/>
            <person name="Geoghagen N.S.M."/>
            <person name="Weidman J.F."/>
            <person name="Fuhrmann J.L."/>
            <person name="Nguyen D."/>
            <person name="Utterback T.R."/>
            <person name="Kelley J.M."/>
            <person name="Peterson J.D."/>
            <person name="Sadow P.W."/>
            <person name="Hanna M.C."/>
            <person name="Cotton M.D."/>
            <person name="Roberts K.M."/>
            <person name="Hurst M.A."/>
            <person name="Kaine B.P."/>
            <person name="Borodovsky M."/>
            <person name="Klenk H.-P."/>
            <person name="Fraser C.M."/>
            <person name="Smith H.O."/>
            <person name="Woese C.R."/>
            <person name="Venter J.C."/>
        </authorList>
    </citation>
    <scope>NUCLEOTIDE SEQUENCE [LARGE SCALE GENOMIC DNA]</scope>
    <source>
        <strain>ATCC 43067 / DSM 2661 / JAL-1 / JCM 10045 / NBRC 100440</strain>
    </source>
</reference>
<reference key="2">
    <citation type="submission" date="2007-05" db="PDB data bank">
        <title>Crystal structure of pyridoxine biosynthesis protein from Methanocaldococcus jannaschii.</title>
        <authorList>
            <person name="Manzoku M."/>
            <person name="Ebihara A."/>
            <person name="Chen L."/>
            <person name="Fu Z.-Q."/>
            <person name="Chrzas J."/>
            <person name="Wang B.-C."/>
            <person name="Yokoyama S."/>
            <person name="Kuramitsu S."/>
        </authorList>
    </citation>
    <scope>X-RAY CRYSTALLOGRAPHY (2.30 ANGSTROMS)</scope>
</reference>
<feature type="chain" id="PRO_0000109435" description="Pyridoxal 5'-phosphate synthase subunit PdxS">
    <location>
        <begin position="1"/>
        <end position="330"/>
    </location>
</feature>
<feature type="active site" description="Schiff-base intermediate with D-ribose 5-phosphate" evidence="1">
    <location>
        <position position="80"/>
    </location>
</feature>
<feature type="binding site" evidence="1">
    <location>
        <position position="23"/>
    </location>
    <ligand>
        <name>D-ribose 5-phosphate</name>
        <dbReference type="ChEBI" id="CHEBI:78346"/>
    </ligand>
</feature>
<feature type="binding site" evidence="1">
    <location>
        <position position="152"/>
    </location>
    <ligand>
        <name>D-ribose 5-phosphate</name>
        <dbReference type="ChEBI" id="CHEBI:78346"/>
    </ligand>
</feature>
<feature type="binding site" evidence="1">
    <location>
        <position position="164"/>
    </location>
    <ligand>
        <name>D-glyceraldehyde 3-phosphate</name>
        <dbReference type="ChEBI" id="CHEBI:59776"/>
    </ligand>
</feature>
<feature type="binding site" evidence="1">
    <location>
        <position position="250"/>
    </location>
    <ligand>
        <name>D-ribose 5-phosphate</name>
        <dbReference type="ChEBI" id="CHEBI:78346"/>
    </ligand>
</feature>
<feature type="binding site" evidence="1">
    <location>
        <begin position="271"/>
        <end position="272"/>
    </location>
    <ligand>
        <name>D-ribose 5-phosphate</name>
        <dbReference type="ChEBI" id="CHEBI:78346"/>
    </ligand>
</feature>
<feature type="helix" evidence="2">
    <location>
        <begin position="7"/>
        <end position="14"/>
    </location>
</feature>
<feature type="turn" evidence="2">
    <location>
        <begin position="15"/>
        <end position="18"/>
    </location>
</feature>
<feature type="strand" evidence="2">
    <location>
        <begin position="19"/>
        <end position="26"/>
    </location>
</feature>
<feature type="helix" evidence="2">
    <location>
        <begin position="27"/>
        <end position="36"/>
    </location>
</feature>
<feature type="strand" evidence="2">
    <location>
        <begin position="39"/>
        <end position="43"/>
    </location>
</feature>
<feature type="helix" evidence="2">
    <location>
        <begin position="48"/>
        <end position="51"/>
    </location>
</feature>
<feature type="helix" evidence="2">
    <location>
        <begin position="63"/>
        <end position="72"/>
    </location>
</feature>
<feature type="strand" evidence="2">
    <location>
        <begin position="77"/>
        <end position="82"/>
    </location>
</feature>
<feature type="helix" evidence="2">
    <location>
        <begin position="86"/>
        <end position="94"/>
    </location>
</feature>
<feature type="strand" evidence="2">
    <location>
        <begin position="98"/>
        <end position="103"/>
    </location>
</feature>
<feature type="helix" evidence="2">
    <location>
        <begin position="117"/>
        <end position="119"/>
    </location>
</feature>
<feature type="strand" evidence="2">
    <location>
        <begin position="124"/>
        <end position="127"/>
    </location>
</feature>
<feature type="helix" evidence="2">
    <location>
        <begin position="131"/>
        <end position="140"/>
    </location>
</feature>
<feature type="strand" evidence="2">
    <location>
        <begin position="143"/>
        <end position="147"/>
    </location>
</feature>
<feature type="helix" evidence="2">
    <location>
        <begin position="157"/>
        <end position="173"/>
    </location>
</feature>
<feature type="helix" evidence="2">
    <location>
        <begin position="178"/>
        <end position="189"/>
    </location>
</feature>
<feature type="helix" evidence="2">
    <location>
        <begin position="190"/>
        <end position="193"/>
    </location>
</feature>
<feature type="helix" evidence="2">
    <location>
        <begin position="194"/>
        <end position="202"/>
    </location>
</feature>
<feature type="strand" evidence="2">
    <location>
        <begin position="213"/>
        <end position="216"/>
    </location>
</feature>
<feature type="helix" evidence="2">
    <location>
        <begin position="221"/>
        <end position="238"/>
    </location>
</feature>
<feature type="strand" evidence="2">
    <location>
        <begin position="242"/>
        <end position="247"/>
    </location>
</feature>
<feature type="helix" evidence="2">
    <location>
        <begin position="254"/>
        <end position="262"/>
    </location>
</feature>
<feature type="strand" evidence="2">
    <location>
        <begin position="268"/>
        <end position="271"/>
    </location>
</feature>
<feature type="helix" evidence="2">
    <location>
        <begin position="272"/>
        <end position="275"/>
    </location>
</feature>
<feature type="helix" evidence="2">
    <location>
        <begin position="280"/>
        <end position="292"/>
    </location>
</feature>
<feature type="turn" evidence="2">
    <location>
        <begin position="293"/>
        <end position="295"/>
    </location>
</feature>
<feature type="helix" evidence="2">
    <location>
        <begin position="297"/>
        <end position="304"/>
    </location>
</feature>
<evidence type="ECO:0000255" key="1">
    <source>
        <dbReference type="HAMAP-Rule" id="MF_01824"/>
    </source>
</evidence>
<evidence type="ECO:0007829" key="2">
    <source>
        <dbReference type="PDB" id="2YZR"/>
    </source>
</evidence>
<comment type="function">
    <text evidence="1">Catalyzes the formation of pyridoxal 5'-phosphate from ribose 5-phosphate (RBP), glyceraldehyde 3-phosphate (G3P) and ammonia. The ammonia is provided by the PdxT subunit. Can also use ribulose 5-phosphate and dihydroxyacetone phosphate as substrates, resulting from enzyme-catalyzed isomerization of RBP and G3P, respectively.</text>
</comment>
<comment type="catalytic activity">
    <reaction evidence="1">
        <text>aldehydo-D-ribose 5-phosphate + D-glyceraldehyde 3-phosphate + L-glutamine = pyridoxal 5'-phosphate + L-glutamate + phosphate + 3 H2O + H(+)</text>
        <dbReference type="Rhea" id="RHEA:31507"/>
        <dbReference type="ChEBI" id="CHEBI:15377"/>
        <dbReference type="ChEBI" id="CHEBI:15378"/>
        <dbReference type="ChEBI" id="CHEBI:29985"/>
        <dbReference type="ChEBI" id="CHEBI:43474"/>
        <dbReference type="ChEBI" id="CHEBI:58273"/>
        <dbReference type="ChEBI" id="CHEBI:58359"/>
        <dbReference type="ChEBI" id="CHEBI:59776"/>
        <dbReference type="ChEBI" id="CHEBI:597326"/>
        <dbReference type="EC" id="4.3.3.6"/>
    </reaction>
</comment>
<comment type="pathway">
    <text evidence="1">Cofactor biosynthesis; pyridoxal 5'-phosphate biosynthesis.</text>
</comment>
<comment type="subunit">
    <text evidence="1">In the presence of PdxT, forms a dodecamer of heterodimers.</text>
</comment>
<comment type="similarity">
    <text evidence="1">Belongs to the PdxS/SNZ family.</text>
</comment>
<accession>Q58090</accession>
<sequence>MKKGTDLLKKGFAKMVKHGVVMDVTNVEQAQIAEEAGAVAVMALERVPADIRAAGGVARMSDPALIEEIMDAVSIPVMAKCRIGHTTEALVLEAIGVDMIDESEVLTQADPFFHIYKKKFNVPFVCGARNLGEAVRRIWEGAAMIRTKGEAGTGNIVEAVRHMRLMNEAIAQLQRMTDEEVYGVAKFYANRYAELAKTVREGMGLPATVLENEPIYEGFTLAEIIDGLYEVLLEVKKLGRLPVVNFAAGGVATPADAALMMQLGSDGVFVGSGIFKSENPLERARAIVEATYNYDKPDIVAEVSKNLGEAMKGIDITQISEAEKMQYRGD</sequence>
<name>PDXS_METJA</name>
<organism>
    <name type="scientific">Methanocaldococcus jannaschii (strain ATCC 43067 / DSM 2661 / JAL-1 / JCM 10045 / NBRC 100440)</name>
    <name type="common">Methanococcus jannaschii</name>
    <dbReference type="NCBI Taxonomy" id="243232"/>
    <lineage>
        <taxon>Archaea</taxon>
        <taxon>Methanobacteriati</taxon>
        <taxon>Methanobacteriota</taxon>
        <taxon>Methanomada group</taxon>
        <taxon>Methanococci</taxon>
        <taxon>Methanococcales</taxon>
        <taxon>Methanocaldococcaceae</taxon>
        <taxon>Methanocaldococcus</taxon>
    </lineage>
</organism>
<protein>
    <recommendedName>
        <fullName evidence="1">Pyridoxal 5'-phosphate synthase subunit PdxS</fullName>
        <shortName evidence="1">PLP synthase subunit PdxS</shortName>
        <ecNumber evidence="1">4.3.3.6</ecNumber>
    </recommendedName>
    <alternativeName>
        <fullName evidence="1">Pdx1</fullName>
    </alternativeName>
</protein>